<gene>
    <name type="ORF">PABG_05921</name>
</gene>
<keyword id="KW-0031">Aminopeptidase</keyword>
<keyword id="KW-0378">Hydrolase</keyword>
<keyword id="KW-0464">Manganese</keyword>
<keyword id="KW-0479">Metal-binding</keyword>
<keyword id="KW-0482">Metalloprotease</keyword>
<keyword id="KW-0645">Protease</keyword>
<dbReference type="EC" id="3.4.11.9"/>
<dbReference type="EMBL" id="KN305540">
    <property type="protein sequence ID" value="EEH15834.1"/>
    <property type="molecule type" value="Genomic_DNA"/>
</dbReference>
<dbReference type="SMR" id="C0SDW6"/>
<dbReference type="VEuPathDB" id="FungiDB:PABG_05921"/>
<dbReference type="HOGENOM" id="CLU_017266_1_2_1"/>
<dbReference type="OrthoDB" id="9302at33183"/>
<dbReference type="GO" id="GO:0030145">
    <property type="term" value="F:manganese ion binding"/>
    <property type="evidence" value="ECO:0007669"/>
    <property type="project" value="InterPro"/>
</dbReference>
<dbReference type="GO" id="GO:0070006">
    <property type="term" value="F:metalloaminopeptidase activity"/>
    <property type="evidence" value="ECO:0007669"/>
    <property type="project" value="InterPro"/>
</dbReference>
<dbReference type="GO" id="GO:0006508">
    <property type="term" value="P:proteolysis"/>
    <property type="evidence" value="ECO:0007669"/>
    <property type="project" value="UniProtKB-KW"/>
</dbReference>
<dbReference type="CDD" id="cd01087">
    <property type="entry name" value="Prolidase"/>
    <property type="match status" value="1"/>
</dbReference>
<dbReference type="Gene3D" id="3.90.230.10">
    <property type="entry name" value="Creatinase/methionine aminopeptidase superfamily"/>
    <property type="match status" value="1"/>
</dbReference>
<dbReference type="Gene3D" id="3.40.350.10">
    <property type="entry name" value="Creatinase/prolidase N-terminal domain"/>
    <property type="match status" value="1"/>
</dbReference>
<dbReference type="InterPro" id="IPR007865">
    <property type="entry name" value="Aminopep_P_N"/>
</dbReference>
<dbReference type="InterPro" id="IPR029149">
    <property type="entry name" value="Creatin/AminoP/Spt16_N"/>
</dbReference>
<dbReference type="InterPro" id="IPR036005">
    <property type="entry name" value="Creatinase/aminopeptidase-like"/>
</dbReference>
<dbReference type="InterPro" id="IPR000994">
    <property type="entry name" value="Pept_M24"/>
</dbReference>
<dbReference type="InterPro" id="IPR001131">
    <property type="entry name" value="Peptidase_M24B_aminopep-P_CS"/>
</dbReference>
<dbReference type="InterPro" id="IPR052433">
    <property type="entry name" value="X-Pro_dipept-like"/>
</dbReference>
<dbReference type="PANTHER" id="PTHR43226">
    <property type="entry name" value="XAA-PRO AMINOPEPTIDASE 3"/>
    <property type="match status" value="1"/>
</dbReference>
<dbReference type="PANTHER" id="PTHR43226:SF3">
    <property type="entry name" value="XAA-PRO AMINOPEPTIDASE AN0832-RELATED"/>
    <property type="match status" value="1"/>
</dbReference>
<dbReference type="Pfam" id="PF05195">
    <property type="entry name" value="AMP_N"/>
    <property type="match status" value="1"/>
</dbReference>
<dbReference type="Pfam" id="PF00557">
    <property type="entry name" value="Peptidase_M24"/>
    <property type="match status" value="1"/>
</dbReference>
<dbReference type="SMART" id="SM01011">
    <property type="entry name" value="AMP_N"/>
    <property type="match status" value="1"/>
</dbReference>
<dbReference type="SUPFAM" id="SSF55920">
    <property type="entry name" value="Creatinase/aminopeptidase"/>
    <property type="match status" value="1"/>
</dbReference>
<dbReference type="SUPFAM" id="SSF53092">
    <property type="entry name" value="Creatinase/prolidase N-terminal domain"/>
    <property type="match status" value="1"/>
</dbReference>
<dbReference type="PROSITE" id="PS00491">
    <property type="entry name" value="PROLINE_PEPTIDASE"/>
    <property type="match status" value="1"/>
</dbReference>
<name>AMPP2_PARBP</name>
<reference key="1">
    <citation type="journal article" date="2011" name="PLoS Genet.">
        <title>Comparative genomic analysis of human fungal pathogens causing paracoccidioidomycosis.</title>
        <authorList>
            <person name="Desjardins C.A."/>
            <person name="Champion M.D."/>
            <person name="Holder J.W."/>
            <person name="Muszewska A."/>
            <person name="Goldberg J."/>
            <person name="Bailao A.M."/>
            <person name="Brigido M.M."/>
            <person name="Ferreira M.E."/>
            <person name="Garcia A.M."/>
            <person name="Grynberg M."/>
            <person name="Gujja S."/>
            <person name="Heiman D.I."/>
            <person name="Henn M.R."/>
            <person name="Kodira C.D."/>
            <person name="Leon-Narvaez H."/>
            <person name="Longo L.V.G."/>
            <person name="Ma L.-J."/>
            <person name="Malavazi I."/>
            <person name="Matsuo A.L."/>
            <person name="Morais F.V."/>
            <person name="Pereira M."/>
            <person name="Rodriguez-Brito S."/>
            <person name="Sakthikumar S."/>
            <person name="Salem-Izacc S.M."/>
            <person name="Sykes S.M."/>
            <person name="Teixeira M.M."/>
            <person name="Vallejo M.C."/>
            <person name="Walter M.E."/>
            <person name="Yandava C."/>
            <person name="Young S."/>
            <person name="Zeng Q."/>
            <person name="Zucker J."/>
            <person name="Felipe M.S."/>
            <person name="Goldman G.H."/>
            <person name="Haas B.J."/>
            <person name="McEwen J.G."/>
            <person name="Nino-Vega G."/>
            <person name="Puccia R."/>
            <person name="San-Blas G."/>
            <person name="Soares C.M."/>
            <person name="Birren B.W."/>
            <person name="Cuomo C.A."/>
        </authorList>
    </citation>
    <scope>NUCLEOTIDE SEQUENCE [LARGE SCALE GENOMIC DNA]</scope>
    <source>
        <strain>Pb03</strain>
    </source>
</reference>
<evidence type="ECO:0000250" key="1"/>
<evidence type="ECO:0000305" key="2"/>
<comment type="function">
    <text evidence="1">Catalyzes the removal of a penultimate prolyl residue from the N-termini of peptides.</text>
</comment>
<comment type="catalytic activity">
    <reaction>
        <text>Release of any N-terminal amino acid, including proline, that is linked to proline, even from a dipeptide or tripeptide.</text>
        <dbReference type="EC" id="3.4.11.9"/>
    </reaction>
</comment>
<comment type="cofactor">
    <cofactor evidence="1">
        <name>Mn(2+)</name>
        <dbReference type="ChEBI" id="CHEBI:29035"/>
    </cofactor>
    <text evidence="1">Binds 2 manganese ions per subunit.</text>
</comment>
<comment type="similarity">
    <text evidence="2">Belongs to the peptidase M24B family.</text>
</comment>
<feature type="chain" id="PRO_0000411844" description="Probable Xaa-Pro aminopeptidase PABG_05921">
    <location>
        <begin position="1"/>
        <end position="506"/>
    </location>
</feature>
<feature type="binding site" evidence="1">
    <location>
        <position position="285"/>
    </location>
    <ligand>
        <name>Mn(2+)</name>
        <dbReference type="ChEBI" id="CHEBI:29035"/>
        <label>2</label>
    </ligand>
</feature>
<feature type="binding site" evidence="1">
    <location>
        <position position="296"/>
    </location>
    <ligand>
        <name>Mn(2+)</name>
        <dbReference type="ChEBI" id="CHEBI:29035"/>
        <label>1</label>
    </ligand>
</feature>
<feature type="binding site" evidence="1">
    <location>
        <position position="296"/>
    </location>
    <ligand>
        <name>Mn(2+)</name>
        <dbReference type="ChEBI" id="CHEBI:29035"/>
        <label>2</label>
    </ligand>
</feature>
<feature type="binding site" evidence="1">
    <location>
        <position position="433"/>
    </location>
    <ligand>
        <name>Mn(2+)</name>
        <dbReference type="ChEBI" id="CHEBI:29035"/>
        <label>1</label>
    </ligand>
</feature>
<feature type="binding site" evidence="1">
    <location>
        <position position="471"/>
    </location>
    <ligand>
        <name>Mn(2+)</name>
        <dbReference type="ChEBI" id="CHEBI:29035"/>
        <label>1</label>
    </ligand>
</feature>
<feature type="binding site" evidence="1">
    <location>
        <position position="471"/>
    </location>
    <ligand>
        <name>Mn(2+)</name>
        <dbReference type="ChEBI" id="CHEBI:29035"/>
        <label>2</label>
    </ligand>
</feature>
<protein>
    <recommendedName>
        <fullName>Probable Xaa-Pro aminopeptidase PABG_05921</fullName>
        <ecNumber>3.4.11.9</ecNumber>
    </recommendedName>
    <alternativeName>
        <fullName>Aminoacylproline aminopeptidase</fullName>
    </alternativeName>
    <alternativeName>
        <fullName>Prolidase</fullName>
    </alternativeName>
</protein>
<sequence length="506" mass="55881">MGTYPAFSGSPQLPEQRLHGTTNLNPAGGYRIELQIQDATFDKYPAKQHAQRVAAKIKKGKGLIFLMGQKAALLEDSDQETRFRQRRYFFYMSGVNEADCDLTYDIQSDKLTLYVPNFDLGREIWMGPTLGPQDALKRYDIDEAKYQSFLQGDIKQWASCSGHGSTIYTLHDSQKPTGDFPNVFMDSETLKPAMDACRVIKDEHEIEQMRHANRVSTAAHIAVLQGICKMTNEAQIEGSFLNTCVSLGAHNQAYGIIAASGANAATLHYSKNNEPLKGRQFVCLDAGAEWNCHASDVTRTFPLTARWPGTEAEQIYALVQNMQESCILRIKEGVRYLDLHHLAHDILIHGFLAIGIFKAGTADEIKKSGASSLFFPHGLGHHIGLEVHDVSPDSIFAQDNDGTTDSWLFSSTYLSPCTASSPTLKSGMVVTVEPGIYFSQIALDNAKPAQLKHIDMDVVKRYMAVGGVRIEDDILVTKDGFENLTSAPKGQAMLDYIQQGNGSCDI</sequence>
<proteinExistence type="inferred from homology"/>
<organism>
    <name type="scientific">Paracoccidioides brasiliensis (strain Pb03)</name>
    <dbReference type="NCBI Taxonomy" id="482561"/>
    <lineage>
        <taxon>Eukaryota</taxon>
        <taxon>Fungi</taxon>
        <taxon>Dikarya</taxon>
        <taxon>Ascomycota</taxon>
        <taxon>Pezizomycotina</taxon>
        <taxon>Eurotiomycetes</taxon>
        <taxon>Eurotiomycetidae</taxon>
        <taxon>Onygenales</taxon>
        <taxon>Ajellomycetaceae</taxon>
        <taxon>Paracoccidioides</taxon>
    </lineage>
</organism>
<accession>C0SDW6</accession>